<comment type="function">
    <text evidence="3">Has antibacterial activity against several Gram-positive and Gram-negative bacteria. Is weakly active against yeasts. Acts by a nonpore mechanism.</text>
</comment>
<comment type="subcellular location">
    <subcellularLocation>
        <location evidence="1">Secreted</location>
    </subcellularLocation>
</comment>
<comment type="tissue specificity">
    <text evidence="3">Expressed in the body wall, intestine, uterus and ovary.</text>
</comment>
<comment type="induction">
    <text evidence="3">By bacterial infection.</text>
</comment>
<comment type="similarity">
    <text evidence="4">Belongs to the cecropin family.</text>
</comment>
<reference key="1">
    <citation type="journal article" date="2005" name="Biochem. J.">
        <title>Cecropin P1 and novel nematode cecropins: a bacteria-inducible antimicrobial peptide family in the nematode Ascaris suum.</title>
        <authorList>
            <person name="Pillai A."/>
            <person name="Ueno S."/>
            <person name="Zhang H."/>
            <person name="Lee J.M."/>
            <person name="Kato Y."/>
        </authorList>
    </citation>
    <scope>NUCLEOTIDE SEQUENCE [GENOMIC DNA / MRNA]</scope>
    <scope>FUNCTION</scope>
    <scope>TISSUE SPECIFICITY</scope>
    <scope>INDUCTION</scope>
</reference>
<sequence length="74" mass="8424">MFLMYLLVQTTESSWLSKTYKKLENSAKKRISEGVAIAILGGLRHRRSVAHQEEASLHVKTDELPSPDTVREQL</sequence>
<name>CECP4_ASCSU</name>
<evidence type="ECO:0000250" key="1"/>
<evidence type="ECO:0000256" key="2">
    <source>
        <dbReference type="SAM" id="MobiDB-lite"/>
    </source>
</evidence>
<evidence type="ECO:0000269" key="3">
    <source>
    </source>
</evidence>
<evidence type="ECO:0000305" key="4"/>
<accession>Q5H7N4</accession>
<keyword id="KW-0044">Antibiotic</keyword>
<keyword id="KW-0929">Antimicrobial</keyword>
<keyword id="KW-0964">Secreted</keyword>
<keyword id="KW-0732">Signal</keyword>
<proteinExistence type="evidence at transcript level"/>
<gene>
    <name type="primary">ASCEC-4</name>
</gene>
<organism>
    <name type="scientific">Ascaris suum</name>
    <name type="common">Pig roundworm</name>
    <name type="synonym">Ascaris lumbricoides</name>
    <dbReference type="NCBI Taxonomy" id="6253"/>
    <lineage>
        <taxon>Eukaryota</taxon>
        <taxon>Metazoa</taxon>
        <taxon>Ecdysozoa</taxon>
        <taxon>Nematoda</taxon>
        <taxon>Chromadorea</taxon>
        <taxon>Rhabditida</taxon>
        <taxon>Spirurina</taxon>
        <taxon>Ascaridomorpha</taxon>
        <taxon>Ascaridoidea</taxon>
        <taxon>Ascarididae</taxon>
        <taxon>Ascaris</taxon>
    </lineage>
</organism>
<protein>
    <recommendedName>
        <fullName>Cecropin-P4</fullName>
    </recommendedName>
</protein>
<dbReference type="EMBL" id="AB186035">
    <property type="protein sequence ID" value="BAD89088.1"/>
    <property type="molecule type" value="mRNA"/>
</dbReference>
<dbReference type="EMBL" id="AB186039">
    <property type="protein sequence ID" value="BAD89092.1"/>
    <property type="molecule type" value="Genomic_DNA"/>
</dbReference>
<dbReference type="SMR" id="Q5H7N4"/>
<dbReference type="GO" id="GO:0005576">
    <property type="term" value="C:extracellular region"/>
    <property type="evidence" value="ECO:0000250"/>
    <property type="project" value="UniProtKB"/>
</dbReference>
<dbReference type="GO" id="GO:0002776">
    <property type="term" value="P:antimicrobial peptide secretion"/>
    <property type="evidence" value="ECO:0000314"/>
    <property type="project" value="UniProtKB"/>
</dbReference>
<dbReference type="GO" id="GO:0042742">
    <property type="term" value="P:defense response to bacterium"/>
    <property type="evidence" value="ECO:0000270"/>
    <property type="project" value="UniProtKB"/>
</dbReference>
<dbReference type="PROSITE" id="PS00268">
    <property type="entry name" value="CECROPIN"/>
    <property type="match status" value="1"/>
</dbReference>
<feature type="signal peptide" evidence="1">
    <location>
        <begin position="1"/>
        <end position="13"/>
    </location>
</feature>
<feature type="chain" id="PRO_0000397969" description="Cecropin-P4">
    <location>
        <begin position="14"/>
        <end position="44"/>
    </location>
</feature>
<feature type="propeptide" id="PRO_0000397970" description="Removed in mature form" evidence="1">
    <location>
        <begin position="45"/>
        <end position="74"/>
    </location>
</feature>
<feature type="region of interest" description="Disordered" evidence="2">
    <location>
        <begin position="51"/>
        <end position="74"/>
    </location>
</feature>